<evidence type="ECO:0000255" key="1">
    <source>
        <dbReference type="HAMAP-Rule" id="MF_00391"/>
    </source>
</evidence>
<evidence type="ECO:0000256" key="2">
    <source>
        <dbReference type="SAM" id="MobiDB-lite"/>
    </source>
</evidence>
<evidence type="ECO:0000305" key="3"/>
<name>RL34_STRTD</name>
<reference key="1">
    <citation type="journal article" date="2006" name="Proc. Natl. Acad. Sci. U.S.A.">
        <title>Comparative genomics of the lactic acid bacteria.</title>
        <authorList>
            <person name="Makarova K.S."/>
            <person name="Slesarev A."/>
            <person name="Wolf Y.I."/>
            <person name="Sorokin A."/>
            <person name="Mirkin B."/>
            <person name="Koonin E.V."/>
            <person name="Pavlov A."/>
            <person name="Pavlova N."/>
            <person name="Karamychev V."/>
            <person name="Polouchine N."/>
            <person name="Shakhova V."/>
            <person name="Grigoriev I."/>
            <person name="Lou Y."/>
            <person name="Rohksar D."/>
            <person name="Lucas S."/>
            <person name="Huang K."/>
            <person name="Goodstein D.M."/>
            <person name="Hawkins T."/>
            <person name="Plengvidhya V."/>
            <person name="Welker D."/>
            <person name="Hughes J."/>
            <person name="Goh Y."/>
            <person name="Benson A."/>
            <person name="Baldwin K."/>
            <person name="Lee J.-H."/>
            <person name="Diaz-Muniz I."/>
            <person name="Dosti B."/>
            <person name="Smeianov V."/>
            <person name="Wechter W."/>
            <person name="Barabote R."/>
            <person name="Lorca G."/>
            <person name="Altermann E."/>
            <person name="Barrangou R."/>
            <person name="Ganesan B."/>
            <person name="Xie Y."/>
            <person name="Rawsthorne H."/>
            <person name="Tamir D."/>
            <person name="Parker C."/>
            <person name="Breidt F."/>
            <person name="Broadbent J.R."/>
            <person name="Hutkins R."/>
            <person name="O'Sullivan D."/>
            <person name="Steele J."/>
            <person name="Unlu G."/>
            <person name="Saier M.H. Jr."/>
            <person name="Klaenhammer T."/>
            <person name="Richardson P."/>
            <person name="Kozyavkin S."/>
            <person name="Weimer B.C."/>
            <person name="Mills D.A."/>
        </authorList>
    </citation>
    <scope>NUCLEOTIDE SEQUENCE [LARGE SCALE GENOMIC DNA]</scope>
    <source>
        <strain>ATCC BAA-491 / LMD-9</strain>
    </source>
</reference>
<proteinExistence type="inferred from homology"/>
<gene>
    <name evidence="1" type="primary">rpmH</name>
    <name type="ordered locus">STER_1787</name>
</gene>
<dbReference type="EMBL" id="CP000419">
    <property type="protein sequence ID" value="ABJ66919.1"/>
    <property type="molecule type" value="Genomic_DNA"/>
</dbReference>
<dbReference type="RefSeq" id="WP_002953513.1">
    <property type="nucleotide sequence ID" value="NZ_CP086001.1"/>
</dbReference>
<dbReference type="SMR" id="Q03IQ3"/>
<dbReference type="GeneID" id="66899545"/>
<dbReference type="KEGG" id="ste:STER_1787"/>
<dbReference type="HOGENOM" id="CLU_129938_2_0_9"/>
<dbReference type="GO" id="GO:1990904">
    <property type="term" value="C:ribonucleoprotein complex"/>
    <property type="evidence" value="ECO:0007669"/>
    <property type="project" value="UniProtKB-KW"/>
</dbReference>
<dbReference type="GO" id="GO:0005840">
    <property type="term" value="C:ribosome"/>
    <property type="evidence" value="ECO:0007669"/>
    <property type="project" value="UniProtKB-KW"/>
</dbReference>
<dbReference type="GO" id="GO:0003735">
    <property type="term" value="F:structural constituent of ribosome"/>
    <property type="evidence" value="ECO:0007669"/>
    <property type="project" value="InterPro"/>
</dbReference>
<dbReference type="GO" id="GO:0006412">
    <property type="term" value="P:translation"/>
    <property type="evidence" value="ECO:0007669"/>
    <property type="project" value="UniProtKB-UniRule"/>
</dbReference>
<dbReference type="FunFam" id="1.10.287.3980:FF:000001">
    <property type="entry name" value="Mitochondrial ribosomal protein L34"/>
    <property type="match status" value="1"/>
</dbReference>
<dbReference type="Gene3D" id="1.10.287.3980">
    <property type="match status" value="1"/>
</dbReference>
<dbReference type="HAMAP" id="MF_00391">
    <property type="entry name" value="Ribosomal_bL34"/>
    <property type="match status" value="1"/>
</dbReference>
<dbReference type="InterPro" id="IPR000271">
    <property type="entry name" value="Ribosomal_bL34"/>
</dbReference>
<dbReference type="InterPro" id="IPR020939">
    <property type="entry name" value="Ribosomal_bL34_CS"/>
</dbReference>
<dbReference type="NCBIfam" id="TIGR01030">
    <property type="entry name" value="rpmH_bact"/>
    <property type="match status" value="1"/>
</dbReference>
<dbReference type="PANTHER" id="PTHR14503:SF4">
    <property type="entry name" value="LARGE RIBOSOMAL SUBUNIT PROTEIN BL34M"/>
    <property type="match status" value="1"/>
</dbReference>
<dbReference type="PANTHER" id="PTHR14503">
    <property type="entry name" value="MITOCHONDRIAL RIBOSOMAL PROTEIN 34 FAMILY MEMBER"/>
    <property type="match status" value="1"/>
</dbReference>
<dbReference type="Pfam" id="PF00468">
    <property type="entry name" value="Ribosomal_L34"/>
    <property type="match status" value="1"/>
</dbReference>
<dbReference type="PROSITE" id="PS00784">
    <property type="entry name" value="RIBOSOMAL_L34"/>
    <property type="match status" value="1"/>
</dbReference>
<comment type="similarity">
    <text evidence="1">Belongs to the bacterial ribosomal protein bL34 family.</text>
</comment>
<sequence length="44" mass="5345">MKRTYQPSKIRRQRKHGFRHRMSTKNGRRVLAARRRKGRKVLAA</sequence>
<feature type="chain" id="PRO_1000013471" description="Large ribosomal subunit protein bL34">
    <location>
        <begin position="1"/>
        <end position="44"/>
    </location>
</feature>
<feature type="region of interest" description="Disordered" evidence="2">
    <location>
        <begin position="1"/>
        <end position="44"/>
    </location>
</feature>
<organism>
    <name type="scientific">Streptococcus thermophilus (strain ATCC BAA-491 / LMD-9)</name>
    <dbReference type="NCBI Taxonomy" id="322159"/>
    <lineage>
        <taxon>Bacteria</taxon>
        <taxon>Bacillati</taxon>
        <taxon>Bacillota</taxon>
        <taxon>Bacilli</taxon>
        <taxon>Lactobacillales</taxon>
        <taxon>Streptococcaceae</taxon>
        <taxon>Streptococcus</taxon>
    </lineage>
</organism>
<protein>
    <recommendedName>
        <fullName evidence="1">Large ribosomal subunit protein bL34</fullName>
    </recommendedName>
    <alternativeName>
        <fullName evidence="3">50S ribosomal protein L34</fullName>
    </alternativeName>
</protein>
<accession>Q03IQ3</accession>
<keyword id="KW-0687">Ribonucleoprotein</keyword>
<keyword id="KW-0689">Ribosomal protein</keyword>